<organism>
    <name type="scientific">Vibrio vulnificus (strain CMCP6)</name>
    <dbReference type="NCBI Taxonomy" id="216895"/>
    <lineage>
        <taxon>Bacteria</taxon>
        <taxon>Pseudomonadati</taxon>
        <taxon>Pseudomonadota</taxon>
        <taxon>Gammaproteobacteria</taxon>
        <taxon>Vibrionales</taxon>
        <taxon>Vibrionaceae</taxon>
        <taxon>Vibrio</taxon>
    </lineage>
</organism>
<name>LEUC_VIBVU</name>
<reference key="1">
    <citation type="submission" date="2002-12" db="EMBL/GenBank/DDBJ databases">
        <title>Complete genome sequence of Vibrio vulnificus CMCP6.</title>
        <authorList>
            <person name="Rhee J.H."/>
            <person name="Kim S.Y."/>
            <person name="Chung S.S."/>
            <person name="Kim J.J."/>
            <person name="Moon Y.H."/>
            <person name="Jeong H."/>
            <person name="Choy H.E."/>
        </authorList>
    </citation>
    <scope>NUCLEOTIDE SEQUENCE [LARGE SCALE GENOMIC DNA]</scope>
    <source>
        <strain>CMCP6</strain>
    </source>
</reference>
<evidence type="ECO:0000255" key="1">
    <source>
        <dbReference type="HAMAP-Rule" id="MF_01026"/>
    </source>
</evidence>
<comment type="function">
    <text evidence="1">Catalyzes the isomerization between 2-isopropylmalate and 3-isopropylmalate, via the formation of 2-isopropylmaleate.</text>
</comment>
<comment type="catalytic activity">
    <reaction evidence="1">
        <text>(2R,3S)-3-isopropylmalate = (2S)-2-isopropylmalate</text>
        <dbReference type="Rhea" id="RHEA:32287"/>
        <dbReference type="ChEBI" id="CHEBI:1178"/>
        <dbReference type="ChEBI" id="CHEBI:35121"/>
        <dbReference type="EC" id="4.2.1.33"/>
    </reaction>
</comment>
<comment type="cofactor">
    <cofactor evidence="1">
        <name>[4Fe-4S] cluster</name>
        <dbReference type="ChEBI" id="CHEBI:49883"/>
    </cofactor>
    <text evidence="1">Binds 1 [4Fe-4S] cluster per subunit.</text>
</comment>
<comment type="pathway">
    <text evidence="1">Amino-acid biosynthesis; L-leucine biosynthesis; L-leucine from 3-methyl-2-oxobutanoate: step 2/4.</text>
</comment>
<comment type="subunit">
    <text evidence="1">Heterodimer of LeuC and LeuD.</text>
</comment>
<comment type="similarity">
    <text evidence="1">Belongs to the aconitase/IPM isomerase family. LeuC type 1 subfamily.</text>
</comment>
<dbReference type="EC" id="4.2.1.33" evidence="1"/>
<dbReference type="EMBL" id="AE016795">
    <property type="protein sequence ID" value="AAO09168.1"/>
    <property type="molecule type" value="Genomic_DNA"/>
</dbReference>
<dbReference type="RefSeq" id="WP_011078735.1">
    <property type="nucleotide sequence ID" value="NC_004459.3"/>
</dbReference>
<dbReference type="SMR" id="Q8DED9"/>
<dbReference type="KEGG" id="vvu:VV1_0656"/>
<dbReference type="HOGENOM" id="CLU_006714_3_4_6"/>
<dbReference type="UniPathway" id="UPA00048">
    <property type="reaction ID" value="UER00071"/>
</dbReference>
<dbReference type="Proteomes" id="UP000002275">
    <property type="component" value="Chromosome 1"/>
</dbReference>
<dbReference type="GO" id="GO:0003861">
    <property type="term" value="F:3-isopropylmalate dehydratase activity"/>
    <property type="evidence" value="ECO:0007669"/>
    <property type="project" value="UniProtKB-UniRule"/>
</dbReference>
<dbReference type="GO" id="GO:0051539">
    <property type="term" value="F:4 iron, 4 sulfur cluster binding"/>
    <property type="evidence" value="ECO:0007669"/>
    <property type="project" value="UniProtKB-KW"/>
</dbReference>
<dbReference type="GO" id="GO:0046872">
    <property type="term" value="F:metal ion binding"/>
    <property type="evidence" value="ECO:0007669"/>
    <property type="project" value="UniProtKB-KW"/>
</dbReference>
<dbReference type="GO" id="GO:0009098">
    <property type="term" value="P:L-leucine biosynthetic process"/>
    <property type="evidence" value="ECO:0007669"/>
    <property type="project" value="UniProtKB-UniRule"/>
</dbReference>
<dbReference type="CDD" id="cd01583">
    <property type="entry name" value="IPMI"/>
    <property type="match status" value="1"/>
</dbReference>
<dbReference type="FunFam" id="3.30.499.10:FF:000006">
    <property type="entry name" value="3-isopropylmalate dehydratase large subunit"/>
    <property type="match status" value="1"/>
</dbReference>
<dbReference type="FunFam" id="3.30.499.10:FF:000007">
    <property type="entry name" value="3-isopropylmalate dehydratase large subunit"/>
    <property type="match status" value="1"/>
</dbReference>
<dbReference type="Gene3D" id="3.30.499.10">
    <property type="entry name" value="Aconitase, domain 3"/>
    <property type="match status" value="2"/>
</dbReference>
<dbReference type="HAMAP" id="MF_01026">
    <property type="entry name" value="LeuC_type1"/>
    <property type="match status" value="1"/>
</dbReference>
<dbReference type="InterPro" id="IPR004430">
    <property type="entry name" value="3-IsopropMal_deHydase_lsu"/>
</dbReference>
<dbReference type="InterPro" id="IPR015931">
    <property type="entry name" value="Acnase/IPM_dHydase_lsu_aba_1/3"/>
</dbReference>
<dbReference type="InterPro" id="IPR001030">
    <property type="entry name" value="Acoase/IPM_deHydtase_lsu_aba"/>
</dbReference>
<dbReference type="InterPro" id="IPR018136">
    <property type="entry name" value="Aconitase_4Fe-4S_BS"/>
</dbReference>
<dbReference type="InterPro" id="IPR036008">
    <property type="entry name" value="Aconitase_4Fe-4S_dom"/>
</dbReference>
<dbReference type="InterPro" id="IPR050067">
    <property type="entry name" value="IPM_dehydratase_rel_enz"/>
</dbReference>
<dbReference type="InterPro" id="IPR033941">
    <property type="entry name" value="IPMI_cat"/>
</dbReference>
<dbReference type="NCBIfam" id="TIGR00170">
    <property type="entry name" value="leuC"/>
    <property type="match status" value="1"/>
</dbReference>
<dbReference type="NCBIfam" id="NF004016">
    <property type="entry name" value="PRK05478.1"/>
    <property type="match status" value="1"/>
</dbReference>
<dbReference type="NCBIfam" id="NF009116">
    <property type="entry name" value="PRK12466.1"/>
    <property type="match status" value="1"/>
</dbReference>
<dbReference type="PANTHER" id="PTHR43822:SF9">
    <property type="entry name" value="3-ISOPROPYLMALATE DEHYDRATASE"/>
    <property type="match status" value="1"/>
</dbReference>
<dbReference type="PANTHER" id="PTHR43822">
    <property type="entry name" value="HOMOACONITASE, MITOCHONDRIAL-RELATED"/>
    <property type="match status" value="1"/>
</dbReference>
<dbReference type="Pfam" id="PF00330">
    <property type="entry name" value="Aconitase"/>
    <property type="match status" value="1"/>
</dbReference>
<dbReference type="PRINTS" id="PR00415">
    <property type="entry name" value="ACONITASE"/>
</dbReference>
<dbReference type="SUPFAM" id="SSF53732">
    <property type="entry name" value="Aconitase iron-sulfur domain"/>
    <property type="match status" value="1"/>
</dbReference>
<dbReference type="PROSITE" id="PS00450">
    <property type="entry name" value="ACONITASE_1"/>
    <property type="match status" value="1"/>
</dbReference>
<dbReference type="PROSITE" id="PS01244">
    <property type="entry name" value="ACONITASE_2"/>
    <property type="match status" value="1"/>
</dbReference>
<keyword id="KW-0004">4Fe-4S</keyword>
<keyword id="KW-0028">Amino-acid biosynthesis</keyword>
<keyword id="KW-0100">Branched-chain amino acid biosynthesis</keyword>
<keyword id="KW-0408">Iron</keyword>
<keyword id="KW-0411">Iron-sulfur</keyword>
<keyword id="KW-0432">Leucine biosynthesis</keyword>
<keyword id="KW-0456">Lyase</keyword>
<keyword id="KW-0479">Metal-binding</keyword>
<sequence length="466" mass="50153">MGKTLYEKVYEAHVAVAAEGETPILYIDRHLVHEVTSPQAFDGLREKGRQVRQVSKTFATMDHNVSTTTKDINASGEMARIQMETLIKNCQEFGVTLYDINHKYQGIVHVMGPELGITLPGMTIVCGDSHTATHGAFGSLAFGIGTSEVEHVLATQTLKQARAKTMKIEVQGKVADGITAKDIVLAIIGKTTAAGGTGYVVEFCGEAITDLSMEGRMTVCNMAIELGAKAGLIAPDQTTFDYIKGRKFAPTGADWDAAVEYWKTLKTDEDAKFDAVVTLNAADIKPQVTWGTNPGQVIAVDEPIPAPESFSDPVEKASAEKALAYMGLEAGKSLSEYKVDKVFVGSCTNSRIEDMRAAAVVAKGRKVASHVQALIVPGSEQVKAQAEAEGLDVIFKEAGFEWRLPGCSMCLAMNNDRLGPHERCASTSNRNFEGRQGRDGRTHLVSPAMAAAAAIAGHFVDIRDWK</sequence>
<feature type="chain" id="PRO_0000076839" description="3-isopropylmalate dehydratase large subunit">
    <location>
        <begin position="1"/>
        <end position="466"/>
    </location>
</feature>
<feature type="binding site" evidence="1">
    <location>
        <position position="347"/>
    </location>
    <ligand>
        <name>[4Fe-4S] cluster</name>
        <dbReference type="ChEBI" id="CHEBI:49883"/>
    </ligand>
</feature>
<feature type="binding site" evidence="1">
    <location>
        <position position="407"/>
    </location>
    <ligand>
        <name>[4Fe-4S] cluster</name>
        <dbReference type="ChEBI" id="CHEBI:49883"/>
    </ligand>
</feature>
<feature type="binding site" evidence="1">
    <location>
        <position position="410"/>
    </location>
    <ligand>
        <name>[4Fe-4S] cluster</name>
        <dbReference type="ChEBI" id="CHEBI:49883"/>
    </ligand>
</feature>
<gene>
    <name evidence="1" type="primary">leuC</name>
    <name type="ordered locus">VV1_0656</name>
</gene>
<accession>Q8DED9</accession>
<protein>
    <recommendedName>
        <fullName evidence="1">3-isopropylmalate dehydratase large subunit</fullName>
        <ecNumber evidence="1">4.2.1.33</ecNumber>
    </recommendedName>
    <alternativeName>
        <fullName evidence="1">Alpha-IPM isomerase</fullName>
        <shortName evidence="1">IPMI</shortName>
    </alternativeName>
    <alternativeName>
        <fullName evidence="1">Isopropylmalate isomerase</fullName>
    </alternativeName>
</protein>
<proteinExistence type="inferred from homology"/>